<name>AROB_NEIG2</name>
<gene>
    <name evidence="1" type="primary">aroB</name>
    <name type="ordered locus">NGK_0131</name>
</gene>
<evidence type="ECO:0000255" key="1">
    <source>
        <dbReference type="HAMAP-Rule" id="MF_00110"/>
    </source>
</evidence>
<proteinExistence type="inferred from homology"/>
<protein>
    <recommendedName>
        <fullName evidence="1">3-dehydroquinate synthase</fullName>
        <shortName evidence="1">DHQS</shortName>
        <ecNumber evidence="1">4.2.3.4</ecNumber>
    </recommendedName>
</protein>
<dbReference type="EC" id="4.2.3.4" evidence="1"/>
<dbReference type="EMBL" id="CP001050">
    <property type="protein sequence ID" value="ACF28829.1"/>
    <property type="molecule type" value="Genomic_DNA"/>
</dbReference>
<dbReference type="RefSeq" id="WP_003690567.1">
    <property type="nucleotide sequence ID" value="NC_011035.1"/>
</dbReference>
<dbReference type="SMR" id="B4RQ17"/>
<dbReference type="GeneID" id="66752358"/>
<dbReference type="KEGG" id="ngk:NGK_0131"/>
<dbReference type="HOGENOM" id="CLU_001201_0_2_4"/>
<dbReference type="UniPathway" id="UPA00053">
    <property type="reaction ID" value="UER00085"/>
</dbReference>
<dbReference type="Proteomes" id="UP000002564">
    <property type="component" value="Chromosome"/>
</dbReference>
<dbReference type="GO" id="GO:0005737">
    <property type="term" value="C:cytoplasm"/>
    <property type="evidence" value="ECO:0007669"/>
    <property type="project" value="UniProtKB-SubCell"/>
</dbReference>
<dbReference type="GO" id="GO:0003856">
    <property type="term" value="F:3-dehydroquinate synthase activity"/>
    <property type="evidence" value="ECO:0007669"/>
    <property type="project" value="UniProtKB-UniRule"/>
</dbReference>
<dbReference type="GO" id="GO:0046872">
    <property type="term" value="F:metal ion binding"/>
    <property type="evidence" value="ECO:0007669"/>
    <property type="project" value="UniProtKB-KW"/>
</dbReference>
<dbReference type="GO" id="GO:0000166">
    <property type="term" value="F:nucleotide binding"/>
    <property type="evidence" value="ECO:0007669"/>
    <property type="project" value="UniProtKB-KW"/>
</dbReference>
<dbReference type="GO" id="GO:0008652">
    <property type="term" value="P:amino acid biosynthetic process"/>
    <property type="evidence" value="ECO:0007669"/>
    <property type="project" value="UniProtKB-KW"/>
</dbReference>
<dbReference type="GO" id="GO:0009073">
    <property type="term" value="P:aromatic amino acid family biosynthetic process"/>
    <property type="evidence" value="ECO:0007669"/>
    <property type="project" value="UniProtKB-KW"/>
</dbReference>
<dbReference type="GO" id="GO:0009423">
    <property type="term" value="P:chorismate biosynthetic process"/>
    <property type="evidence" value="ECO:0007669"/>
    <property type="project" value="UniProtKB-UniRule"/>
</dbReference>
<dbReference type="CDD" id="cd08195">
    <property type="entry name" value="DHQS"/>
    <property type="match status" value="1"/>
</dbReference>
<dbReference type="FunFam" id="1.20.1090.10:FF:000002">
    <property type="entry name" value="3-dehydroquinate synthase"/>
    <property type="match status" value="1"/>
</dbReference>
<dbReference type="FunFam" id="3.40.50.1970:FF:000001">
    <property type="entry name" value="3-dehydroquinate synthase"/>
    <property type="match status" value="1"/>
</dbReference>
<dbReference type="Gene3D" id="3.40.50.1970">
    <property type="match status" value="1"/>
</dbReference>
<dbReference type="Gene3D" id="1.20.1090.10">
    <property type="entry name" value="Dehydroquinate synthase-like - alpha domain"/>
    <property type="match status" value="1"/>
</dbReference>
<dbReference type="HAMAP" id="MF_00110">
    <property type="entry name" value="DHQ_synthase"/>
    <property type="match status" value="1"/>
</dbReference>
<dbReference type="InterPro" id="IPR050071">
    <property type="entry name" value="Dehydroquinate_synthase"/>
</dbReference>
<dbReference type="InterPro" id="IPR016037">
    <property type="entry name" value="DHQ_synth_AroB"/>
</dbReference>
<dbReference type="InterPro" id="IPR030963">
    <property type="entry name" value="DHQ_synth_fam"/>
</dbReference>
<dbReference type="InterPro" id="IPR030960">
    <property type="entry name" value="DHQS/DOIS_N"/>
</dbReference>
<dbReference type="InterPro" id="IPR056179">
    <property type="entry name" value="DHQS_C"/>
</dbReference>
<dbReference type="NCBIfam" id="TIGR01357">
    <property type="entry name" value="aroB"/>
    <property type="match status" value="1"/>
</dbReference>
<dbReference type="PANTHER" id="PTHR43622">
    <property type="entry name" value="3-DEHYDROQUINATE SYNTHASE"/>
    <property type="match status" value="1"/>
</dbReference>
<dbReference type="PANTHER" id="PTHR43622:SF7">
    <property type="entry name" value="3-DEHYDROQUINATE SYNTHASE, CHLOROPLASTIC"/>
    <property type="match status" value="1"/>
</dbReference>
<dbReference type="Pfam" id="PF01761">
    <property type="entry name" value="DHQ_synthase"/>
    <property type="match status" value="1"/>
</dbReference>
<dbReference type="Pfam" id="PF24621">
    <property type="entry name" value="DHQS_C"/>
    <property type="match status" value="1"/>
</dbReference>
<dbReference type="PIRSF" id="PIRSF001455">
    <property type="entry name" value="DHQ_synth"/>
    <property type="match status" value="1"/>
</dbReference>
<dbReference type="SUPFAM" id="SSF56796">
    <property type="entry name" value="Dehydroquinate synthase-like"/>
    <property type="match status" value="1"/>
</dbReference>
<organism>
    <name type="scientific">Neisseria gonorrhoeae (strain NCCP11945)</name>
    <dbReference type="NCBI Taxonomy" id="521006"/>
    <lineage>
        <taxon>Bacteria</taxon>
        <taxon>Pseudomonadati</taxon>
        <taxon>Pseudomonadota</taxon>
        <taxon>Betaproteobacteria</taxon>
        <taxon>Neisseriales</taxon>
        <taxon>Neisseriaceae</taxon>
        <taxon>Neisseria</taxon>
    </lineage>
</organism>
<keyword id="KW-0028">Amino-acid biosynthesis</keyword>
<keyword id="KW-0057">Aromatic amino acid biosynthesis</keyword>
<keyword id="KW-0170">Cobalt</keyword>
<keyword id="KW-0963">Cytoplasm</keyword>
<keyword id="KW-0456">Lyase</keyword>
<keyword id="KW-0479">Metal-binding</keyword>
<keyword id="KW-0520">NAD</keyword>
<keyword id="KW-0547">Nucleotide-binding</keyword>
<keyword id="KW-0862">Zinc</keyword>
<feature type="chain" id="PRO_1000094550" description="3-dehydroquinate synthase">
    <location>
        <begin position="1"/>
        <end position="359"/>
    </location>
</feature>
<feature type="binding site" evidence="1">
    <location>
        <begin position="71"/>
        <end position="76"/>
    </location>
    <ligand>
        <name>NAD(+)</name>
        <dbReference type="ChEBI" id="CHEBI:57540"/>
    </ligand>
</feature>
<feature type="binding site" evidence="1">
    <location>
        <begin position="105"/>
        <end position="109"/>
    </location>
    <ligand>
        <name>NAD(+)</name>
        <dbReference type="ChEBI" id="CHEBI:57540"/>
    </ligand>
</feature>
<feature type="binding site" evidence="1">
    <location>
        <begin position="129"/>
        <end position="130"/>
    </location>
    <ligand>
        <name>NAD(+)</name>
        <dbReference type="ChEBI" id="CHEBI:57540"/>
    </ligand>
</feature>
<feature type="binding site" evidence="1">
    <location>
        <position position="142"/>
    </location>
    <ligand>
        <name>NAD(+)</name>
        <dbReference type="ChEBI" id="CHEBI:57540"/>
    </ligand>
</feature>
<feature type="binding site" evidence="1">
    <location>
        <position position="151"/>
    </location>
    <ligand>
        <name>NAD(+)</name>
        <dbReference type="ChEBI" id="CHEBI:57540"/>
    </ligand>
</feature>
<feature type="binding site" evidence="1">
    <location>
        <begin position="169"/>
        <end position="172"/>
    </location>
    <ligand>
        <name>NAD(+)</name>
        <dbReference type="ChEBI" id="CHEBI:57540"/>
    </ligand>
</feature>
<feature type="binding site" evidence="1">
    <location>
        <position position="184"/>
    </location>
    <ligand>
        <name>Zn(2+)</name>
        <dbReference type="ChEBI" id="CHEBI:29105"/>
    </ligand>
</feature>
<feature type="binding site" evidence="1">
    <location>
        <position position="247"/>
    </location>
    <ligand>
        <name>Zn(2+)</name>
        <dbReference type="ChEBI" id="CHEBI:29105"/>
    </ligand>
</feature>
<feature type="binding site" evidence="1">
    <location>
        <position position="264"/>
    </location>
    <ligand>
        <name>Zn(2+)</name>
        <dbReference type="ChEBI" id="CHEBI:29105"/>
    </ligand>
</feature>
<sequence>MKTLTVHTPSHSYPIFIGNGLLPQAGSLLKPHLGKRAAIITNETVAPLYLGTLQTALDAAGVSHFSIILPDGEAHKNWQTLNLIFDGLMQNRAERKTTLIALGGGVIGDMVGFAAATYQRGAPFIQIPTTLLSQVDSSVGGKTAINHPLGKNMIGAFYQPQAVLADLDTLHTLPARELSAGMAEVIKYGALGDIGFFEWLEQHMPELMALERAPLTQAVYRCCQMKADIVAQDETEQGIRAWLNLGHTFGHAVEAEMGYGVWLHGEAVAAGCVLAARLSEQLGKTSAADTARLAALLEAAGLPSAPPVFAFEKWLAHMSHDKKVSGGIMRFIGLNRLGEAVITEITDTDILRRTLQPYL</sequence>
<comment type="function">
    <text evidence="1">Catalyzes the conversion of 3-deoxy-D-arabino-heptulosonate 7-phosphate (DAHP) to dehydroquinate (DHQ).</text>
</comment>
<comment type="catalytic activity">
    <reaction evidence="1">
        <text>7-phospho-2-dehydro-3-deoxy-D-arabino-heptonate = 3-dehydroquinate + phosphate</text>
        <dbReference type="Rhea" id="RHEA:21968"/>
        <dbReference type="ChEBI" id="CHEBI:32364"/>
        <dbReference type="ChEBI" id="CHEBI:43474"/>
        <dbReference type="ChEBI" id="CHEBI:58394"/>
        <dbReference type="EC" id="4.2.3.4"/>
    </reaction>
</comment>
<comment type="cofactor">
    <cofactor evidence="1">
        <name>Co(2+)</name>
        <dbReference type="ChEBI" id="CHEBI:48828"/>
    </cofactor>
    <cofactor evidence="1">
        <name>Zn(2+)</name>
        <dbReference type="ChEBI" id="CHEBI:29105"/>
    </cofactor>
    <text evidence="1">Binds 1 divalent metal cation per subunit. Can use either Co(2+) or Zn(2+).</text>
</comment>
<comment type="cofactor">
    <cofactor evidence="1">
        <name>NAD(+)</name>
        <dbReference type="ChEBI" id="CHEBI:57540"/>
    </cofactor>
</comment>
<comment type="pathway">
    <text evidence="1">Metabolic intermediate biosynthesis; chorismate biosynthesis; chorismate from D-erythrose 4-phosphate and phosphoenolpyruvate: step 2/7.</text>
</comment>
<comment type="subcellular location">
    <subcellularLocation>
        <location evidence="1">Cytoplasm</location>
    </subcellularLocation>
</comment>
<comment type="similarity">
    <text evidence="1">Belongs to the sugar phosphate cyclases superfamily. Dehydroquinate synthase family.</text>
</comment>
<reference key="1">
    <citation type="journal article" date="2008" name="J. Bacteriol.">
        <title>Complete genome sequence of Neisseria gonorrhoeae NCCP11945.</title>
        <authorList>
            <person name="Chung G.T."/>
            <person name="Yoo J.S."/>
            <person name="Oh H.B."/>
            <person name="Lee Y.S."/>
            <person name="Cha S.H."/>
            <person name="Kim S.J."/>
            <person name="Yoo C.K."/>
        </authorList>
    </citation>
    <scope>NUCLEOTIDE SEQUENCE [LARGE SCALE GENOMIC DNA]</scope>
    <source>
        <strain>NCCP11945</strain>
    </source>
</reference>
<accession>B4RQ17</accession>